<dbReference type="EC" id="2.1.1.228" evidence="1"/>
<dbReference type="EMBL" id="CP000727">
    <property type="protein sequence ID" value="ABS37211.1"/>
    <property type="molecule type" value="Genomic_DNA"/>
</dbReference>
<dbReference type="EMBL" id="AM412317">
    <property type="protein sequence ID" value="CAL83995.1"/>
    <property type="molecule type" value="Genomic_DNA"/>
</dbReference>
<dbReference type="RefSeq" id="WP_003384686.1">
    <property type="nucleotide sequence ID" value="NC_009698.1"/>
</dbReference>
<dbReference type="RefSeq" id="YP_001254944.1">
    <property type="nucleotide sequence ID" value="NC_009495.1"/>
</dbReference>
<dbReference type="RefSeq" id="YP_001388137.1">
    <property type="nucleotide sequence ID" value="NC_009698.1"/>
</dbReference>
<dbReference type="SMR" id="A5I4M3"/>
<dbReference type="GeneID" id="5186700"/>
<dbReference type="KEGG" id="cbh:CLC_2293"/>
<dbReference type="KEGG" id="cbo:CBO2445"/>
<dbReference type="PATRIC" id="fig|413999.7.peg.2422"/>
<dbReference type="HOGENOM" id="CLU_047363_0_1_9"/>
<dbReference type="PRO" id="PR:A5I4M3"/>
<dbReference type="Proteomes" id="UP000001986">
    <property type="component" value="Chromosome"/>
</dbReference>
<dbReference type="GO" id="GO:0005829">
    <property type="term" value="C:cytosol"/>
    <property type="evidence" value="ECO:0000318"/>
    <property type="project" value="GO_Central"/>
</dbReference>
<dbReference type="GO" id="GO:0052906">
    <property type="term" value="F:tRNA (guanine(37)-N1)-methyltransferase activity"/>
    <property type="evidence" value="ECO:0000318"/>
    <property type="project" value="GO_Central"/>
</dbReference>
<dbReference type="GO" id="GO:0002939">
    <property type="term" value="P:tRNA N1-guanine methylation"/>
    <property type="evidence" value="ECO:0000318"/>
    <property type="project" value="GO_Central"/>
</dbReference>
<dbReference type="CDD" id="cd18080">
    <property type="entry name" value="TrmD-like"/>
    <property type="match status" value="1"/>
</dbReference>
<dbReference type="FunFam" id="1.10.1270.20:FF:000001">
    <property type="entry name" value="tRNA (guanine-N(1)-)-methyltransferase"/>
    <property type="match status" value="1"/>
</dbReference>
<dbReference type="FunFam" id="3.40.1280.10:FF:000001">
    <property type="entry name" value="tRNA (guanine-N(1)-)-methyltransferase"/>
    <property type="match status" value="1"/>
</dbReference>
<dbReference type="Gene3D" id="3.40.1280.10">
    <property type="match status" value="1"/>
</dbReference>
<dbReference type="Gene3D" id="1.10.1270.20">
    <property type="entry name" value="tRNA(m1g37)methyltransferase, domain 2"/>
    <property type="match status" value="1"/>
</dbReference>
<dbReference type="HAMAP" id="MF_00605">
    <property type="entry name" value="TrmD"/>
    <property type="match status" value="1"/>
</dbReference>
<dbReference type="InterPro" id="IPR029028">
    <property type="entry name" value="Alpha/beta_knot_MTases"/>
</dbReference>
<dbReference type="InterPro" id="IPR023148">
    <property type="entry name" value="tRNA_m1G_MeTrfase_C_sf"/>
</dbReference>
<dbReference type="InterPro" id="IPR002649">
    <property type="entry name" value="tRNA_m1G_MeTrfase_TrmD"/>
</dbReference>
<dbReference type="InterPro" id="IPR029026">
    <property type="entry name" value="tRNA_m1G_MTases_N"/>
</dbReference>
<dbReference type="InterPro" id="IPR016009">
    <property type="entry name" value="tRNA_MeTrfase_TRMD/TRM10"/>
</dbReference>
<dbReference type="NCBIfam" id="NF000648">
    <property type="entry name" value="PRK00026.1"/>
    <property type="match status" value="1"/>
</dbReference>
<dbReference type="NCBIfam" id="TIGR00088">
    <property type="entry name" value="trmD"/>
    <property type="match status" value="1"/>
</dbReference>
<dbReference type="PANTHER" id="PTHR46417">
    <property type="entry name" value="TRNA (GUANINE-N(1)-)-METHYLTRANSFERASE"/>
    <property type="match status" value="1"/>
</dbReference>
<dbReference type="PANTHER" id="PTHR46417:SF1">
    <property type="entry name" value="TRNA (GUANINE-N(1)-)-METHYLTRANSFERASE"/>
    <property type="match status" value="1"/>
</dbReference>
<dbReference type="Pfam" id="PF01746">
    <property type="entry name" value="tRNA_m1G_MT"/>
    <property type="match status" value="1"/>
</dbReference>
<dbReference type="PIRSF" id="PIRSF000386">
    <property type="entry name" value="tRNA_mtase"/>
    <property type="match status" value="1"/>
</dbReference>
<dbReference type="SUPFAM" id="SSF75217">
    <property type="entry name" value="alpha/beta knot"/>
    <property type="match status" value="1"/>
</dbReference>
<protein>
    <recommendedName>
        <fullName evidence="1">tRNA (guanine-N(1)-)-methyltransferase</fullName>
        <ecNumber evidence="1">2.1.1.228</ecNumber>
    </recommendedName>
    <alternativeName>
        <fullName evidence="1">M1G-methyltransferase</fullName>
    </alternativeName>
    <alternativeName>
        <fullName evidence="1">tRNA [GM37] methyltransferase</fullName>
    </alternativeName>
</protein>
<organism>
    <name type="scientific">Clostridium botulinum (strain Hall / ATCC 3502 / NCTC 13319 / Type A)</name>
    <dbReference type="NCBI Taxonomy" id="441771"/>
    <lineage>
        <taxon>Bacteria</taxon>
        <taxon>Bacillati</taxon>
        <taxon>Bacillota</taxon>
        <taxon>Clostridia</taxon>
        <taxon>Eubacteriales</taxon>
        <taxon>Clostridiaceae</taxon>
        <taxon>Clostridium</taxon>
    </lineage>
</organism>
<gene>
    <name evidence="1" type="primary">trmD</name>
    <name type="ordered locus">CBO2445</name>
    <name type="ordered locus">CLC_2293</name>
</gene>
<reference key="1">
    <citation type="journal article" date="2007" name="Genome Res.">
        <title>Genome sequence of a proteolytic (Group I) Clostridium botulinum strain Hall A and comparative analysis of the clostridial genomes.</title>
        <authorList>
            <person name="Sebaihia M."/>
            <person name="Peck M.W."/>
            <person name="Minton N.P."/>
            <person name="Thomson N.R."/>
            <person name="Holden M.T.G."/>
            <person name="Mitchell W.J."/>
            <person name="Carter A.T."/>
            <person name="Bentley S.D."/>
            <person name="Mason D.R."/>
            <person name="Crossman L."/>
            <person name="Paul C.J."/>
            <person name="Ivens A."/>
            <person name="Wells-Bennik M.H.J."/>
            <person name="Davis I.J."/>
            <person name="Cerdeno-Tarraga A.M."/>
            <person name="Churcher C."/>
            <person name="Quail M.A."/>
            <person name="Chillingworth T."/>
            <person name="Feltwell T."/>
            <person name="Fraser A."/>
            <person name="Goodhead I."/>
            <person name="Hance Z."/>
            <person name="Jagels K."/>
            <person name="Larke N."/>
            <person name="Maddison M."/>
            <person name="Moule S."/>
            <person name="Mungall K."/>
            <person name="Norbertczak H."/>
            <person name="Rabbinowitsch E."/>
            <person name="Sanders M."/>
            <person name="Simmonds M."/>
            <person name="White B."/>
            <person name="Whithead S."/>
            <person name="Parkhill J."/>
        </authorList>
    </citation>
    <scope>NUCLEOTIDE SEQUENCE [LARGE SCALE GENOMIC DNA]</scope>
    <source>
        <strain>Hall / ATCC 3502 / NCTC 13319 / Type A</strain>
    </source>
</reference>
<reference key="2">
    <citation type="journal article" date="2007" name="PLoS ONE">
        <title>Analysis of the neurotoxin complex genes in Clostridium botulinum A1-A4 and B1 strains: BoNT/A3, /Ba4 and /B1 clusters are located within plasmids.</title>
        <authorList>
            <person name="Smith T.J."/>
            <person name="Hill K.K."/>
            <person name="Foley B.T."/>
            <person name="Detter J.C."/>
            <person name="Munk A.C."/>
            <person name="Bruce D.C."/>
            <person name="Doggett N.A."/>
            <person name="Smith L.A."/>
            <person name="Marks J.D."/>
            <person name="Xie G."/>
            <person name="Brettin T.S."/>
        </authorList>
    </citation>
    <scope>NUCLEOTIDE SEQUENCE [LARGE SCALE GENOMIC DNA]</scope>
    <source>
        <strain>Hall / ATCC 3502 / NCTC 13319 / Type A</strain>
    </source>
</reference>
<feature type="chain" id="PRO_1000006471" description="tRNA (guanine-N(1)-)-methyltransferase">
    <location>
        <begin position="1"/>
        <end position="240"/>
    </location>
</feature>
<feature type="binding site" evidence="1">
    <location>
        <position position="110"/>
    </location>
    <ligand>
        <name>S-adenosyl-L-methionine</name>
        <dbReference type="ChEBI" id="CHEBI:59789"/>
    </ligand>
</feature>
<feature type="binding site" evidence="1">
    <location>
        <begin position="129"/>
        <end position="134"/>
    </location>
    <ligand>
        <name>S-adenosyl-L-methionine</name>
        <dbReference type="ChEBI" id="CHEBI:59789"/>
    </ligand>
</feature>
<sequence>MRIDVLTLFPEMFSIFNHSIIGRAIEKEILKINTVNIRDYTIDKHKKVDDYPYGGGAGMVMSVQPIVDSIKAVKKENKGKVIFLGPKGKTFNQNLAKELAKEEELIFLCGHYEGIDERAYEYIDMEISLGDFVLTGGEMACIPIVDSICRLVDGVLGSSESYEDESFYNGLLEYPQYTRPAIYEGKSVPEVLLSGHHENIKKWRKAKSLIITDKVRPDLFKKYKLTEEDKKILKDFNKKL</sequence>
<keyword id="KW-0963">Cytoplasm</keyword>
<keyword id="KW-0489">Methyltransferase</keyword>
<keyword id="KW-1185">Reference proteome</keyword>
<keyword id="KW-0949">S-adenosyl-L-methionine</keyword>
<keyword id="KW-0808">Transferase</keyword>
<keyword id="KW-0819">tRNA processing</keyword>
<accession>A5I4M3</accession>
<accession>A7G5S2</accession>
<evidence type="ECO:0000255" key="1">
    <source>
        <dbReference type="HAMAP-Rule" id="MF_00605"/>
    </source>
</evidence>
<name>TRMD_CLOBH</name>
<proteinExistence type="inferred from homology"/>
<comment type="function">
    <text evidence="1">Specifically methylates guanosine-37 in various tRNAs.</text>
</comment>
<comment type="catalytic activity">
    <reaction evidence="1">
        <text>guanosine(37) in tRNA + S-adenosyl-L-methionine = N(1)-methylguanosine(37) in tRNA + S-adenosyl-L-homocysteine + H(+)</text>
        <dbReference type="Rhea" id="RHEA:36899"/>
        <dbReference type="Rhea" id="RHEA-COMP:10145"/>
        <dbReference type="Rhea" id="RHEA-COMP:10147"/>
        <dbReference type="ChEBI" id="CHEBI:15378"/>
        <dbReference type="ChEBI" id="CHEBI:57856"/>
        <dbReference type="ChEBI" id="CHEBI:59789"/>
        <dbReference type="ChEBI" id="CHEBI:73542"/>
        <dbReference type="ChEBI" id="CHEBI:74269"/>
        <dbReference type="EC" id="2.1.1.228"/>
    </reaction>
</comment>
<comment type="subunit">
    <text evidence="1">Homodimer.</text>
</comment>
<comment type="subcellular location">
    <subcellularLocation>
        <location evidence="1">Cytoplasm</location>
    </subcellularLocation>
</comment>
<comment type="similarity">
    <text evidence="1">Belongs to the RNA methyltransferase TrmD family.</text>
</comment>